<evidence type="ECO:0000250" key="1"/>
<evidence type="ECO:0000255" key="2"/>
<evidence type="ECO:0000305" key="3"/>
<reference key="1">
    <citation type="journal article" date="2000" name="Nucleic Acids Res.">
        <title>Genome sequences of Chlamydia trachomatis MoPn and Chlamydia pneumoniae AR39.</title>
        <authorList>
            <person name="Read T.D."/>
            <person name="Brunham R.C."/>
            <person name="Shen C."/>
            <person name="Gill S.R."/>
            <person name="Heidelberg J.F."/>
            <person name="White O."/>
            <person name="Hickey E.K."/>
            <person name="Peterson J.D."/>
            <person name="Utterback T.R."/>
            <person name="Berry K.J."/>
            <person name="Bass S."/>
            <person name="Linher K.D."/>
            <person name="Weidman J.F."/>
            <person name="Khouri H.M."/>
            <person name="Craven B."/>
            <person name="Bowman C."/>
            <person name="Dodson R.J."/>
            <person name="Gwinn M.L."/>
            <person name="Nelson W.C."/>
            <person name="DeBoy R.T."/>
            <person name="Kolonay J.F."/>
            <person name="McClarty G."/>
            <person name="Salzberg S.L."/>
            <person name="Eisen J.A."/>
            <person name="Fraser C.M."/>
        </authorList>
    </citation>
    <scope>NUCLEOTIDE SEQUENCE [LARGE SCALE GENOMIC DNA]</scope>
    <source>
        <strain>MoPn / Nigg</strain>
    </source>
</reference>
<keyword id="KW-0067">ATP-binding</keyword>
<keyword id="KW-0963">Cytoplasm</keyword>
<keyword id="KW-0227">DNA damage</keyword>
<keyword id="KW-0234">DNA repair</keyword>
<keyword id="KW-0235">DNA replication</keyword>
<keyword id="KW-0238">DNA-binding</keyword>
<keyword id="KW-0547">Nucleotide-binding</keyword>
<keyword id="KW-0742">SOS response</keyword>
<feature type="chain" id="PRO_0000196404" description="DNA replication and repair protein RecF">
    <location>
        <begin position="1"/>
        <end position="365"/>
    </location>
</feature>
<feature type="binding site" evidence="2">
    <location>
        <begin position="30"/>
        <end position="37"/>
    </location>
    <ligand>
        <name>ATP</name>
        <dbReference type="ChEBI" id="CHEBI:30616"/>
    </ligand>
</feature>
<accession>Q9PKW5</accession>
<comment type="function">
    <text evidence="1">The RecF protein is involved in DNA metabolism; it is required for DNA replication and normal SOS inducibility. RecF binds preferentially to single-stranded, linear DNA. It also seems to bind ATP (By similarity).</text>
</comment>
<comment type="subcellular location">
    <subcellularLocation>
        <location evidence="1">Cytoplasm</location>
    </subcellularLocation>
</comment>
<comment type="similarity">
    <text evidence="3">Belongs to the RecF family.</text>
</comment>
<protein>
    <recommendedName>
        <fullName>DNA replication and repair protein RecF</fullName>
    </recommendedName>
</protein>
<gene>
    <name type="primary">recF</name>
    <name type="ordered locus">TC_0346</name>
</gene>
<dbReference type="EMBL" id="AE002160">
    <property type="protein sequence ID" value="AAF39207.1"/>
    <property type="molecule type" value="Genomic_DNA"/>
</dbReference>
<dbReference type="PIR" id="B81713">
    <property type="entry name" value="B81713"/>
</dbReference>
<dbReference type="RefSeq" id="WP_010230223.1">
    <property type="nucleotide sequence ID" value="NZ_CP063055.1"/>
</dbReference>
<dbReference type="SMR" id="Q9PKW5"/>
<dbReference type="GeneID" id="1246389"/>
<dbReference type="KEGG" id="cmu:TC_0346"/>
<dbReference type="eggNOG" id="COG1195">
    <property type="taxonomic scope" value="Bacteria"/>
</dbReference>
<dbReference type="HOGENOM" id="CLU_040267_0_1_0"/>
<dbReference type="OrthoDB" id="9803889at2"/>
<dbReference type="Proteomes" id="UP000000800">
    <property type="component" value="Chromosome"/>
</dbReference>
<dbReference type="GO" id="GO:0005737">
    <property type="term" value="C:cytoplasm"/>
    <property type="evidence" value="ECO:0007669"/>
    <property type="project" value="UniProtKB-SubCell"/>
</dbReference>
<dbReference type="GO" id="GO:0005524">
    <property type="term" value="F:ATP binding"/>
    <property type="evidence" value="ECO:0007669"/>
    <property type="project" value="UniProtKB-UniRule"/>
</dbReference>
<dbReference type="GO" id="GO:0003697">
    <property type="term" value="F:single-stranded DNA binding"/>
    <property type="evidence" value="ECO:0007669"/>
    <property type="project" value="UniProtKB-UniRule"/>
</dbReference>
<dbReference type="GO" id="GO:0006260">
    <property type="term" value="P:DNA replication"/>
    <property type="evidence" value="ECO:0007669"/>
    <property type="project" value="UniProtKB-UniRule"/>
</dbReference>
<dbReference type="GO" id="GO:0000731">
    <property type="term" value="P:DNA synthesis involved in DNA repair"/>
    <property type="evidence" value="ECO:0007669"/>
    <property type="project" value="TreeGrafter"/>
</dbReference>
<dbReference type="GO" id="GO:0006302">
    <property type="term" value="P:double-strand break repair"/>
    <property type="evidence" value="ECO:0007669"/>
    <property type="project" value="TreeGrafter"/>
</dbReference>
<dbReference type="GO" id="GO:0009432">
    <property type="term" value="P:SOS response"/>
    <property type="evidence" value="ECO:0007669"/>
    <property type="project" value="UniProtKB-UniRule"/>
</dbReference>
<dbReference type="Gene3D" id="3.40.50.300">
    <property type="entry name" value="P-loop containing nucleotide triphosphate hydrolases"/>
    <property type="match status" value="1"/>
</dbReference>
<dbReference type="Gene3D" id="1.20.1050.90">
    <property type="entry name" value="RecF/RecN/SMC, N-terminal domain"/>
    <property type="match status" value="1"/>
</dbReference>
<dbReference type="HAMAP" id="MF_00365">
    <property type="entry name" value="RecF"/>
    <property type="match status" value="1"/>
</dbReference>
<dbReference type="InterPro" id="IPR001238">
    <property type="entry name" value="DNA-binding_RecF"/>
</dbReference>
<dbReference type="InterPro" id="IPR018078">
    <property type="entry name" value="DNA-binding_RecF_CS"/>
</dbReference>
<dbReference type="InterPro" id="IPR027417">
    <property type="entry name" value="P-loop_NTPase"/>
</dbReference>
<dbReference type="InterPro" id="IPR003395">
    <property type="entry name" value="RecF/RecN/SMC_N"/>
</dbReference>
<dbReference type="InterPro" id="IPR042174">
    <property type="entry name" value="RecF_2"/>
</dbReference>
<dbReference type="NCBIfam" id="TIGR00611">
    <property type="entry name" value="recf"/>
    <property type="match status" value="1"/>
</dbReference>
<dbReference type="PANTHER" id="PTHR32182">
    <property type="entry name" value="DNA REPLICATION AND REPAIR PROTEIN RECF"/>
    <property type="match status" value="1"/>
</dbReference>
<dbReference type="PANTHER" id="PTHR32182:SF0">
    <property type="entry name" value="DNA REPLICATION AND REPAIR PROTEIN RECF"/>
    <property type="match status" value="1"/>
</dbReference>
<dbReference type="Pfam" id="PF02463">
    <property type="entry name" value="SMC_N"/>
    <property type="match status" value="1"/>
</dbReference>
<dbReference type="SUPFAM" id="SSF52540">
    <property type="entry name" value="P-loop containing nucleoside triphosphate hydrolases"/>
    <property type="match status" value="1"/>
</dbReference>
<dbReference type="PROSITE" id="PS00617">
    <property type="entry name" value="RECF_1"/>
    <property type="match status" value="1"/>
</dbReference>
<dbReference type="PROSITE" id="PS00618">
    <property type="entry name" value="RECF_2"/>
    <property type="match status" value="1"/>
</dbReference>
<name>RECF_CHLMU</name>
<sequence length="365" mass="41321">MRVHSLFLKDFRNYSELRLELGPEMNSIFGLNAQGKTNILEALYILSLGRSFRTSRLTEAIRFGSSHFFIEAVFSQNQVFHTLSIQVDKRGKKILFDGAPITKLSALVGLFPVILFSVKDTTIIEGSPAERRRFLDLLLAQASEKYTGQIALYHKALDQRNAAIKTQDYKTIAAWNSPLIAYGSLVALLRYECAKKLHKIFQNLWDNTLKETLSLRYESSLITTESPTLNDIASNYYEQLRLANTKDFELGYTTVGPHRDELIITLNDLPVSKFSSEGQKHSLLAVLRFAECVYLQEEFLIHPLLCMDDIHACLDQNRLDQLFQLSTSLGQTVTTSTICPNHLDSNSSIFHVTQAQVSLVTSNFL</sequence>
<organism>
    <name type="scientific">Chlamydia muridarum (strain MoPn / Nigg)</name>
    <dbReference type="NCBI Taxonomy" id="243161"/>
    <lineage>
        <taxon>Bacteria</taxon>
        <taxon>Pseudomonadati</taxon>
        <taxon>Chlamydiota</taxon>
        <taxon>Chlamydiia</taxon>
        <taxon>Chlamydiales</taxon>
        <taxon>Chlamydiaceae</taxon>
        <taxon>Chlamydia/Chlamydophila group</taxon>
        <taxon>Chlamydia</taxon>
    </lineage>
</organism>
<proteinExistence type="inferred from homology"/>